<organism>
    <name type="scientific">Brucella abortus (strain S19)</name>
    <dbReference type="NCBI Taxonomy" id="430066"/>
    <lineage>
        <taxon>Bacteria</taxon>
        <taxon>Pseudomonadati</taxon>
        <taxon>Pseudomonadota</taxon>
        <taxon>Alphaproteobacteria</taxon>
        <taxon>Hyphomicrobiales</taxon>
        <taxon>Brucellaceae</taxon>
        <taxon>Brucella/Ochrobactrum group</taxon>
        <taxon>Brucella</taxon>
    </lineage>
</organism>
<keyword id="KW-0997">Cell inner membrane</keyword>
<keyword id="KW-1003">Cell membrane</keyword>
<keyword id="KW-0472">Membrane</keyword>
<keyword id="KW-0653">Protein transport</keyword>
<keyword id="KW-0811">Translocation</keyword>
<keyword id="KW-0812">Transmembrane</keyword>
<keyword id="KW-1133">Transmembrane helix</keyword>
<keyword id="KW-0813">Transport</keyword>
<dbReference type="EMBL" id="CP000887">
    <property type="protein sequence ID" value="ACD72362.1"/>
    <property type="molecule type" value="Genomic_DNA"/>
</dbReference>
<dbReference type="RefSeq" id="WP_002964012.1">
    <property type="nucleotide sequence ID" value="NC_010742.1"/>
</dbReference>
<dbReference type="SMR" id="B2S5B5"/>
<dbReference type="KEGG" id="bmc:BAbS19_I08410"/>
<dbReference type="HOGENOM" id="CLU_086034_5_0_5"/>
<dbReference type="Proteomes" id="UP000002565">
    <property type="component" value="Chromosome 1"/>
</dbReference>
<dbReference type="GO" id="GO:0033281">
    <property type="term" value="C:TAT protein transport complex"/>
    <property type="evidence" value="ECO:0007669"/>
    <property type="project" value="UniProtKB-UniRule"/>
</dbReference>
<dbReference type="GO" id="GO:0008320">
    <property type="term" value="F:protein transmembrane transporter activity"/>
    <property type="evidence" value="ECO:0007669"/>
    <property type="project" value="UniProtKB-UniRule"/>
</dbReference>
<dbReference type="GO" id="GO:0043953">
    <property type="term" value="P:protein transport by the Tat complex"/>
    <property type="evidence" value="ECO:0007669"/>
    <property type="project" value="UniProtKB-UniRule"/>
</dbReference>
<dbReference type="Gene3D" id="1.20.5.3310">
    <property type="match status" value="1"/>
</dbReference>
<dbReference type="HAMAP" id="MF_00236">
    <property type="entry name" value="TatA_E"/>
    <property type="match status" value="1"/>
</dbReference>
<dbReference type="InterPro" id="IPR003369">
    <property type="entry name" value="TatA/B/E"/>
</dbReference>
<dbReference type="InterPro" id="IPR006312">
    <property type="entry name" value="TatA/E"/>
</dbReference>
<dbReference type="NCBIfam" id="NF001940">
    <property type="entry name" value="PRK00720.1"/>
    <property type="match status" value="1"/>
</dbReference>
<dbReference type="NCBIfam" id="TIGR01411">
    <property type="entry name" value="tatAE"/>
    <property type="match status" value="1"/>
</dbReference>
<dbReference type="PANTHER" id="PTHR42982">
    <property type="entry name" value="SEC-INDEPENDENT PROTEIN TRANSLOCASE PROTEIN TATA"/>
    <property type="match status" value="1"/>
</dbReference>
<dbReference type="PANTHER" id="PTHR42982:SF1">
    <property type="entry name" value="SEC-INDEPENDENT PROTEIN TRANSLOCASE PROTEIN TATA"/>
    <property type="match status" value="1"/>
</dbReference>
<dbReference type="Pfam" id="PF02416">
    <property type="entry name" value="TatA_B_E"/>
    <property type="match status" value="1"/>
</dbReference>
<comment type="function">
    <text evidence="1">Part of the twin-arginine translocation (Tat) system that transports large folded proteins containing a characteristic twin-arginine motif in their signal peptide across membranes. TatA could form the protein-conducting channel of the Tat system.</text>
</comment>
<comment type="subunit">
    <text evidence="1">The Tat system comprises two distinct complexes: a TatABC complex, containing multiple copies of TatA, TatB and TatC subunits, and a separate TatA complex, containing only TatA subunits. Substrates initially bind to the TatABC complex, which probably triggers association of the separate TatA complex to form the active translocon.</text>
</comment>
<comment type="subcellular location">
    <subcellularLocation>
        <location evidence="1">Cell inner membrane</location>
        <topology evidence="1">Single-pass membrane protein</topology>
    </subcellularLocation>
</comment>
<comment type="similarity">
    <text evidence="1">Belongs to the TatA/E family.</text>
</comment>
<protein>
    <recommendedName>
        <fullName evidence="1">Sec-independent protein translocase protein TatA</fullName>
    </recommendedName>
</protein>
<gene>
    <name evidence="1" type="primary">tatA</name>
    <name type="ordered locus">BAbS19_I08410</name>
</gene>
<name>TATA_BRUA1</name>
<sequence>MGSFSIWHWLIVLAVVLLLFGRGKIPELMGDVAKGIKNFKQGMADEDAKEDPRTIDAKAEEPVKDVKKTTKS</sequence>
<accession>B2S5B5</accession>
<feature type="chain" id="PRO_1000125197" description="Sec-independent protein translocase protein TatA">
    <location>
        <begin position="1"/>
        <end position="72"/>
    </location>
</feature>
<feature type="transmembrane region" description="Helical" evidence="1">
    <location>
        <begin position="1"/>
        <end position="21"/>
    </location>
</feature>
<feature type="region of interest" description="Disordered" evidence="2">
    <location>
        <begin position="43"/>
        <end position="72"/>
    </location>
</feature>
<feature type="compositionally biased region" description="Basic and acidic residues" evidence="2">
    <location>
        <begin position="50"/>
        <end position="72"/>
    </location>
</feature>
<proteinExistence type="inferred from homology"/>
<evidence type="ECO:0000255" key="1">
    <source>
        <dbReference type="HAMAP-Rule" id="MF_00236"/>
    </source>
</evidence>
<evidence type="ECO:0000256" key="2">
    <source>
        <dbReference type="SAM" id="MobiDB-lite"/>
    </source>
</evidence>
<reference key="1">
    <citation type="journal article" date="2008" name="PLoS ONE">
        <title>Genome sequence of Brucella abortus vaccine strain S19 compared to virulent strains yields candidate virulence genes.</title>
        <authorList>
            <person name="Crasta O.R."/>
            <person name="Folkerts O."/>
            <person name="Fei Z."/>
            <person name="Mane S.P."/>
            <person name="Evans C."/>
            <person name="Martino-Catt S."/>
            <person name="Bricker B."/>
            <person name="Yu G."/>
            <person name="Du L."/>
            <person name="Sobral B.W."/>
        </authorList>
    </citation>
    <scope>NUCLEOTIDE SEQUENCE [LARGE SCALE GENOMIC DNA]</scope>
    <source>
        <strain>S19</strain>
    </source>
</reference>